<dbReference type="EC" id="2.8.2.-" evidence="4"/>
<dbReference type="SMR" id="A0A8C2LVE3"/>
<dbReference type="Ensembl" id="ENSCGRT00001012904.1">
    <property type="protein sequence ID" value="ENSCGRP00001008760.1"/>
    <property type="gene ID" value="ENSCGRG00001010979.1"/>
</dbReference>
<dbReference type="GeneTree" id="ENSGT00530000063408"/>
<dbReference type="Proteomes" id="UP000694386">
    <property type="component" value="Unplaced"/>
</dbReference>
<dbReference type="Proteomes" id="UP001108280">
    <property type="component" value="Chromosome 1"/>
</dbReference>
<dbReference type="GO" id="GO:0000139">
    <property type="term" value="C:Golgi membrane"/>
    <property type="evidence" value="ECO:0007669"/>
    <property type="project" value="UniProtKB-SubCell"/>
</dbReference>
<dbReference type="GO" id="GO:0050656">
    <property type="term" value="F:3'-phosphoadenosine 5'-phosphosulfate binding"/>
    <property type="evidence" value="ECO:0000314"/>
    <property type="project" value="UniProtKB"/>
</dbReference>
<dbReference type="GO" id="GO:0004394">
    <property type="term" value="F:heparan sulfate 2-sulfotransferase activity"/>
    <property type="evidence" value="ECO:0000314"/>
    <property type="project" value="UniProtKB"/>
</dbReference>
<dbReference type="GO" id="GO:0010467">
    <property type="term" value="P:gene expression"/>
    <property type="evidence" value="ECO:0007669"/>
    <property type="project" value="Ensembl"/>
</dbReference>
<dbReference type="GO" id="GO:0015012">
    <property type="term" value="P:heparan sulfate proteoglycan biosynthetic process"/>
    <property type="evidence" value="ECO:0007669"/>
    <property type="project" value="Ensembl"/>
</dbReference>
<dbReference type="GO" id="GO:0030202">
    <property type="term" value="P:heparin proteoglycan metabolic process"/>
    <property type="evidence" value="ECO:0007669"/>
    <property type="project" value="Ensembl"/>
</dbReference>
<dbReference type="GO" id="GO:0060676">
    <property type="term" value="P:ureteric bud formation"/>
    <property type="evidence" value="ECO:0007669"/>
    <property type="project" value="Ensembl"/>
</dbReference>
<dbReference type="FunFam" id="3.40.50.300:FF:000534">
    <property type="entry name" value="Heparan sulfate 2-O-sulfotransferase 1"/>
    <property type="match status" value="1"/>
</dbReference>
<dbReference type="Gene3D" id="3.40.50.300">
    <property type="entry name" value="P-loop containing nucleotide triphosphate hydrolases"/>
    <property type="match status" value="1"/>
</dbReference>
<dbReference type="InterPro" id="IPR007734">
    <property type="entry name" value="Heparan_SO4_2-O-STrfase"/>
</dbReference>
<dbReference type="InterPro" id="IPR027417">
    <property type="entry name" value="P-loop_NTPase"/>
</dbReference>
<dbReference type="InterPro" id="IPR005331">
    <property type="entry name" value="Sulfotransferase"/>
</dbReference>
<dbReference type="PANTHER" id="PTHR12129">
    <property type="entry name" value="HEPARAN SULFATE 2-O-SULFOTRANSFERASE"/>
    <property type="match status" value="1"/>
</dbReference>
<dbReference type="PANTHER" id="PTHR12129:SF17">
    <property type="entry name" value="HEPARAN SULFATE 2-O-SULFOTRANSFERASE 1"/>
    <property type="match status" value="1"/>
</dbReference>
<dbReference type="Pfam" id="PF03567">
    <property type="entry name" value="Sulfotransfer_2"/>
    <property type="match status" value="1"/>
</dbReference>
<dbReference type="SUPFAM" id="SSF52540">
    <property type="entry name" value="P-loop containing nucleoside triphosphate hydrolases"/>
    <property type="match status" value="1"/>
</dbReference>
<gene>
    <name evidence="3" type="primary">HS2ST1</name>
    <name evidence="10" type="synonym">LOC100760748</name>
</gene>
<protein>
    <recommendedName>
        <fullName evidence="3">Heparan sulfate 2-O-sulfotransferase 1</fullName>
        <ecNumber evidence="4">2.8.2.-</ecNumber>
    </recommendedName>
    <alternativeName>
        <fullName evidence="4">2-O-sulfotransferase</fullName>
        <shortName evidence="4">2-OST</shortName>
        <shortName evidence="2">2OST</shortName>
    </alternativeName>
    <alternativeName>
        <fullName evidence="4">HS 2-O-sulfotransferase</fullName>
    </alternativeName>
    <alternativeName>
        <fullName evidence="4">Heparan sulfate 2-sulfotransferase</fullName>
    </alternativeName>
</protein>
<keyword id="KW-0175">Coiled coil</keyword>
<keyword id="KW-1015">Disulfide bond</keyword>
<keyword id="KW-0325">Glycoprotein</keyword>
<keyword id="KW-0333">Golgi apparatus</keyword>
<keyword id="KW-0472">Membrane</keyword>
<keyword id="KW-0735">Signal-anchor</keyword>
<keyword id="KW-0808">Transferase</keyword>
<keyword id="KW-0812">Transmembrane</keyword>
<keyword id="KW-1133">Transmembrane helix</keyword>
<comment type="function">
    <text evidence="4 7">Catalyzes the transfer of a sulfo group from 3'-phospho-5'-adenylyl sulfate (PAPS) to the 2-OH position of iduronic acid (IdoA) or glucuronic acid (GlcA) within the heparan sulfate (HS) chain and participates in HS biosynthesis (PubMed:17227754). Required for metanephric development of kidney formation, suggesting that 2-O-sulfation within HS is essential for signaling between ureteric bud and metanephric mesenchyme (By similarity).</text>
</comment>
<comment type="biophysicochemical properties">
    <kinetics>
        <KM evidence="7">18.5 uM for 3'-phosphoadenylyl sulfate</KM>
    </kinetics>
</comment>
<comment type="subunit">
    <text evidence="2 4 8">Homotrimer (PubMed:19022906). Interacts with the C5-epimerase GLCE (By similarity).</text>
</comment>
<comment type="subcellular location">
    <subcellularLocation>
        <location evidence="4">Golgi apparatus membrane</location>
        <topology evidence="4">Single-pass type II membrane protein</topology>
    </subcellularLocation>
</comment>
<comment type="PTM">
    <text evidence="1">N-glycosylated.</text>
</comment>
<comment type="similarity">
    <text evidence="9">Belongs to the sulfotransferase 3 family.</text>
</comment>
<proteinExistence type="evidence at protein level"/>
<reference evidence="11" key="1">
    <citation type="journal article" date="2018" name="Biotechnol. Bioeng.">
        <title>A reference genome of the Chinese hamster based on a hybrid assembly strategy.</title>
        <authorList>
            <person name="Rupp O."/>
            <person name="MacDonald M.L."/>
            <person name="Li S."/>
            <person name="Dhiman H."/>
            <person name="Polson S."/>
            <person name="Griep S."/>
            <person name="Heffner K."/>
            <person name="Hernandez I."/>
            <person name="Brinkrolf K."/>
            <person name="Jadhav V."/>
            <person name="Samoudi M."/>
            <person name="Hao H."/>
            <person name="Kingham B."/>
            <person name="Goesmann A."/>
            <person name="Betenbaugh M.J."/>
            <person name="Lewis N.E."/>
            <person name="Borth N."/>
            <person name="Lee K.H."/>
        </authorList>
    </citation>
    <scope>NUCLEOTIDE SEQUENCE [LARGE SCALE GENOMIC DNA]</scope>
</reference>
<reference evidence="9" key="2">
    <citation type="journal article" date="2007" name="J. Biol. Chem.">
        <title>Mutational study of heparan sulfate 2-O-sulfotransferase and chondroitin sulfate 2-O-sulfotransferase.</title>
        <authorList>
            <person name="Xu D."/>
            <person name="Song D."/>
            <person name="Pedersen L.C."/>
            <person name="Liu J."/>
        </authorList>
    </citation>
    <scope>FUNCTION</scope>
    <scope>CATALYTIC ACTIVITY</scope>
    <scope>BIOPHYSICOCHEMICAL PROPERTIES</scope>
    <scope>ACTIVE SITE</scope>
    <scope>MUTAGENESIS OF ARG-80; LYS-83; THR-84; SER-86; THR-87; HIS-140; HIS-142; ARG-164; SER-172; ARG-178; ASP-181; ARG-188; ARG-189; ARG-190; LYS-191 AND ARG-288</scope>
</reference>
<reference key="3">
    <citation type="journal article" date="2008" name="Proc. Natl. Acad. Sci. U.S.A.">
        <title>Redirecting the substrate specificity of heparan sulfate 2-O-sulfotransferase by structurally guided mutagenesis.</title>
        <authorList>
            <person name="Bethea H.N."/>
            <person name="Xu D."/>
            <person name="Liu J."/>
            <person name="Pedersen L.C."/>
        </authorList>
    </citation>
    <scope>SUBUNIT</scope>
</reference>
<name>HS2ST_CRIGR</name>
<feature type="chain" id="PRO_0000461689" description="Heparan sulfate 2-O-sulfotransferase 1">
    <location>
        <begin position="1"/>
        <end position="356"/>
    </location>
</feature>
<feature type="topological domain" description="Cytoplasmic" evidence="9">
    <location>
        <begin position="1"/>
        <end position="11"/>
    </location>
</feature>
<feature type="transmembrane region" description="Helical; Signal-anchor for type II membrane protein" evidence="5">
    <location>
        <begin position="12"/>
        <end position="28"/>
    </location>
</feature>
<feature type="topological domain" description="Lumenal" evidence="9">
    <location>
        <begin position="29"/>
        <end position="356"/>
    </location>
</feature>
<feature type="coiled-coil region" evidence="5">
    <location>
        <begin position="24"/>
        <end position="51"/>
    </location>
</feature>
<feature type="active site" evidence="7">
    <location>
        <position position="140"/>
    </location>
</feature>
<feature type="active site" evidence="7">
    <location>
        <position position="142"/>
    </location>
</feature>
<feature type="binding site" evidence="2">
    <location>
        <position position="83"/>
    </location>
    <ligand>
        <name>adenosine 3',5'-bisphosphate</name>
        <dbReference type="ChEBI" id="CHEBI:58343"/>
    </ligand>
</feature>
<feature type="binding site" evidence="2">
    <location>
        <position position="84"/>
    </location>
    <ligand>
        <name>adenosine 3',5'-bisphosphate</name>
        <dbReference type="ChEBI" id="CHEBI:58343"/>
    </ligand>
</feature>
<feature type="binding site" evidence="2">
    <location>
        <position position="85"/>
    </location>
    <ligand>
        <name>adenosine 3',5'-bisphosphate</name>
        <dbReference type="ChEBI" id="CHEBI:58343"/>
    </ligand>
</feature>
<feature type="binding site" evidence="2">
    <location>
        <position position="86"/>
    </location>
    <ligand>
        <name>adenosine 3',5'-bisphosphate</name>
        <dbReference type="ChEBI" id="CHEBI:58343"/>
    </ligand>
</feature>
<feature type="binding site" evidence="2">
    <location>
        <position position="87"/>
    </location>
    <ligand>
        <name>adenosine 3',5'-bisphosphate</name>
        <dbReference type="ChEBI" id="CHEBI:58343"/>
    </ligand>
</feature>
<feature type="binding site" evidence="2">
    <location>
        <position position="88"/>
    </location>
    <ligand>
        <name>adenosine 3',5'-bisphosphate</name>
        <dbReference type="ChEBI" id="CHEBI:58343"/>
    </ligand>
</feature>
<feature type="binding site" evidence="2">
    <location>
        <position position="164"/>
    </location>
    <ligand>
        <name>adenosine 3',5'-bisphosphate</name>
        <dbReference type="ChEBI" id="CHEBI:58343"/>
    </ligand>
</feature>
<feature type="binding site" evidence="2">
    <location>
        <position position="172"/>
    </location>
    <ligand>
        <name>adenosine 3',5'-bisphosphate</name>
        <dbReference type="ChEBI" id="CHEBI:58343"/>
    </ligand>
</feature>
<feature type="binding site" evidence="2">
    <location>
        <position position="279"/>
    </location>
    <ligand>
        <name>adenosine 3',5'-bisphosphate</name>
        <dbReference type="ChEBI" id="CHEBI:58343"/>
    </ligand>
</feature>
<feature type="binding site" evidence="2">
    <location>
        <position position="285"/>
    </location>
    <ligand>
        <name>adenosine 3',5'-bisphosphate</name>
        <dbReference type="ChEBI" id="CHEBI:58343"/>
    </ligand>
</feature>
<feature type="binding site" evidence="2">
    <location>
        <position position="290"/>
    </location>
    <ligand>
        <name>adenosine 3',5'-bisphosphate</name>
        <dbReference type="ChEBI" id="CHEBI:58343"/>
    </ligand>
</feature>
<feature type="binding site" evidence="2">
    <location>
        <position position="293"/>
    </location>
    <ligand>
        <name>adenosine 3',5'-bisphosphate</name>
        <dbReference type="ChEBI" id="CHEBI:58343"/>
    </ligand>
</feature>
<feature type="glycosylation site" description="N-linked (GlcNAc...) asparagine" evidence="6">
    <location>
        <position position="108"/>
    </location>
</feature>
<feature type="glycosylation site" description="N-linked (GlcNAc...) asparagine" evidence="6">
    <location>
        <position position="127"/>
    </location>
</feature>
<feature type="disulfide bond" evidence="2">
    <location>
        <begin position="201"/>
        <end position="209"/>
    </location>
</feature>
<feature type="disulfide bond" evidence="2">
    <location>
        <begin position="222"/>
        <end position="228"/>
    </location>
</feature>
<feature type="mutagenesis site" description="Severe reduction of catalytic activity but no effect on 3'-phosphoadenylyl sulfate substrate binding; probably disrupts binding to the carboxyl group of the iduronic acid of the polysaccharide substrate." evidence="7">
    <original>R</original>
    <variation>A</variation>
    <location>
        <position position="80"/>
    </location>
</feature>
<feature type="mutagenesis site" description="Loss of catalytic activity due to disruption of binding to the substrate 3'-phosphoadenylyl sulfate." evidence="7">
    <original>K</original>
    <variation>A</variation>
    <location>
        <position position="83"/>
    </location>
</feature>
<feature type="mutagenesis site" description="Severe reduction of catalytic activity due to disruption of binding to the substrate 3'-phosphoadenylyl sulfate." evidence="7">
    <original>T</original>
    <variation>A</variation>
    <location>
        <position position="84"/>
    </location>
</feature>
<feature type="mutagenesis site" description="Loss of catalytic activity due to disruption of binding to the substrate 3'-phosphoadenylyl sulfate." evidence="7">
    <original>S</original>
    <variation>A</variation>
    <location>
        <position position="86"/>
    </location>
</feature>
<feature type="mutagenesis site" description="Severe reduction of catalytic activity due to disruption of binding to the substrate 3'-phosphoadenylyl sulfate." evidence="7">
    <original>T</original>
    <variation>A</variation>
    <location>
        <position position="87"/>
    </location>
</feature>
<feature type="mutagenesis site" description="Severely abrogates catalytic activity but does not affect 3'-phosphoadenylyl sulfate substrate binding. Completely abolishes catalytic activity; when associated with A-142." evidence="7">
    <original>H</original>
    <variation>A</variation>
    <location>
        <position position="140"/>
    </location>
</feature>
<feature type="mutagenesis site" description="Severely abrogates catalytic activity but does not affect 3'-phosphoadenylyl sulfate substrate binding. Completely abolishes catalytic activity; when associated with A-140." evidence="7">
    <original>H</original>
    <variation>A</variation>
    <location>
        <position position="142"/>
    </location>
</feature>
<feature type="mutagenesis site" description="Severe reduction of catalytic activity due to disruption of binding to the substrate 3'-phosphoadenylyl sulfate." evidence="7">
    <original>R</original>
    <variation>A</variation>
    <location>
        <position position="164"/>
    </location>
</feature>
<feature type="mutagenesis site" description="Severe reduction of catalytic activity due to disruption of binding to the substrate 3'-phosphoadenylyl sulfate." evidence="7">
    <original>S</original>
    <variation>A</variation>
    <location>
        <position position="172"/>
    </location>
</feature>
<feature type="mutagenesis site" description="Severe reduction of catalytic activity but no effect on 3'-phosphoadenylyl sulfate substrate binding; probably disrupts binding to the polysaccharide substrate." evidence="7">
    <original>R</original>
    <variation>A</variation>
    <location>
        <position position="178"/>
    </location>
</feature>
<feature type="mutagenesis site" description="Severe reduction of catalytic activity but no effect on 3'-phosphoadenylyl sulfate substrate binding; probably disrupts binding to the polysaccharide substrate." evidence="7">
    <original>D</original>
    <variation>A</variation>
    <location>
        <position position="181"/>
    </location>
</feature>
<feature type="mutagenesis site" description="No effect on catalytic activity." evidence="7">
    <original>R</original>
    <variation>A</variation>
    <location>
        <position position="188"/>
    </location>
</feature>
<feature type="mutagenesis site" description="Severe reduction of catalytic activity but no effect on 3'-phosphoadenylyl sulfate substrate binding." evidence="7">
    <original>R</original>
    <variation>A</variation>
    <location>
        <position position="189"/>
    </location>
</feature>
<feature type="mutagenesis site" description="No effect on catalytic activity." evidence="7">
    <original>R</original>
    <variation>A</variation>
    <location>
        <position position="190"/>
    </location>
</feature>
<feature type="mutagenesis site" description="No effect on catalytic activity." evidence="7">
    <original>K</original>
    <variation>A</variation>
    <location>
        <position position="191"/>
    </location>
</feature>
<feature type="mutagenesis site" description="Severely abrogates catalytic activity but does not affect 3'-phosphoadenylyl sulfate substrate binding; may be involved in polysaccharide substrate binding specificity." evidence="7">
    <original>R</original>
    <variation>A</variation>
    <variation>T</variation>
    <location>
        <position position="288"/>
    </location>
</feature>
<accession>A0A8C2LVE3</accession>
<evidence type="ECO:0000250" key="1">
    <source>
        <dbReference type="UniProtKB" id="O08889"/>
    </source>
</evidence>
<evidence type="ECO:0000250" key="2">
    <source>
        <dbReference type="UniProtKB" id="Q76KB1"/>
    </source>
</evidence>
<evidence type="ECO:0000250" key="3">
    <source>
        <dbReference type="UniProtKB" id="Q7LGA3"/>
    </source>
</evidence>
<evidence type="ECO:0000250" key="4">
    <source>
        <dbReference type="UniProtKB" id="Q8R3H7"/>
    </source>
</evidence>
<evidence type="ECO:0000255" key="5"/>
<evidence type="ECO:0000255" key="6">
    <source>
        <dbReference type="PROSITE-ProRule" id="PRU00498"/>
    </source>
</evidence>
<evidence type="ECO:0000269" key="7">
    <source>
    </source>
</evidence>
<evidence type="ECO:0000269" key="8">
    <source>
    </source>
</evidence>
<evidence type="ECO:0000305" key="9"/>
<evidence type="ECO:0000312" key="10">
    <source>
        <dbReference type="Ensembl" id="ENSCGRP00001008760.1"/>
    </source>
</evidence>
<evidence type="ECO:0000312" key="11">
    <source>
        <dbReference type="Proteomes" id="UP001108280"/>
    </source>
</evidence>
<sequence length="356" mass="41831">MGLLRIMMPPKLQLLAVVAFAVAMLFLENQIQKLEESRAKLERAIARHEVREIEQRHTMDGPRQDAAVDEEEDIVIIYNRVPKTASTSFTNIAYDLCAKNRYHVLHINTTKNNPVMSLQDQVRFVKNITTWNEMKPGFYHGHISYLDFAKFGVKKKPIYINVIRDPIERLVSYYYFLRFGDDYRPGLRRRKQGDKKTFDECVAEGGSDCAPEKLWLQIPFFCGHSSECWNVGSRWAMDQAKYNLINEYFLVGVTEELEDFIMLLEAALPRFFRGATDLYRTGKKSHLRKTTEKKLPTKQTIAKLQQSDIWKMENEFYEFALEQFQFIRAHAVREKDGDLYILAQNFFYEKIYPKSN</sequence>
<organism evidence="11">
    <name type="scientific">Cricetulus griseus</name>
    <name type="common">Chinese hamster</name>
    <name type="synonym">Cricetulus barabensis griseus</name>
    <dbReference type="NCBI Taxonomy" id="10029"/>
    <lineage>
        <taxon>Eukaryota</taxon>
        <taxon>Metazoa</taxon>
        <taxon>Chordata</taxon>
        <taxon>Craniata</taxon>
        <taxon>Vertebrata</taxon>
        <taxon>Euteleostomi</taxon>
        <taxon>Mammalia</taxon>
        <taxon>Eutheria</taxon>
        <taxon>Euarchontoglires</taxon>
        <taxon>Glires</taxon>
        <taxon>Rodentia</taxon>
        <taxon>Myomorpha</taxon>
        <taxon>Muroidea</taxon>
        <taxon>Cricetidae</taxon>
        <taxon>Cricetinae</taxon>
        <taxon>Cricetulus</taxon>
    </lineage>
</organism>